<proteinExistence type="inferred from homology"/>
<organism>
    <name type="scientific">Salmonella paratyphi A (strain AKU_12601)</name>
    <dbReference type="NCBI Taxonomy" id="554290"/>
    <lineage>
        <taxon>Bacteria</taxon>
        <taxon>Pseudomonadati</taxon>
        <taxon>Pseudomonadota</taxon>
        <taxon>Gammaproteobacteria</taxon>
        <taxon>Enterobacterales</taxon>
        <taxon>Enterobacteriaceae</taxon>
        <taxon>Salmonella</taxon>
    </lineage>
</organism>
<reference key="1">
    <citation type="journal article" date="2009" name="BMC Genomics">
        <title>Pseudogene accumulation in the evolutionary histories of Salmonella enterica serovars Paratyphi A and Typhi.</title>
        <authorList>
            <person name="Holt K.E."/>
            <person name="Thomson N.R."/>
            <person name="Wain J."/>
            <person name="Langridge G.C."/>
            <person name="Hasan R."/>
            <person name="Bhutta Z.A."/>
            <person name="Quail M.A."/>
            <person name="Norbertczak H."/>
            <person name="Walker D."/>
            <person name="Simmonds M."/>
            <person name="White B."/>
            <person name="Bason N."/>
            <person name="Mungall K."/>
            <person name="Dougan G."/>
            <person name="Parkhill J."/>
        </authorList>
    </citation>
    <scope>NUCLEOTIDE SEQUENCE [LARGE SCALE GENOMIC DNA]</scope>
    <source>
        <strain>AKU_12601</strain>
    </source>
</reference>
<evidence type="ECO:0000255" key="1">
    <source>
        <dbReference type="HAMAP-Rule" id="MF_00104"/>
    </source>
</evidence>
<accession>B5BAT0</accession>
<keyword id="KW-0963">Cytoplasm</keyword>
<keyword id="KW-0255">Endonuclease</keyword>
<keyword id="KW-0378">Hydrolase</keyword>
<keyword id="KW-0460">Magnesium</keyword>
<keyword id="KW-0479">Metal-binding</keyword>
<keyword id="KW-0507">mRNA processing</keyword>
<keyword id="KW-0540">Nuclease</keyword>
<keyword id="KW-0694">RNA-binding</keyword>
<keyword id="KW-0698">rRNA processing</keyword>
<keyword id="KW-0699">rRNA-binding</keyword>
<keyword id="KW-0819">tRNA processing</keyword>
<feature type="chain" id="PRO_1000094131" description="Ribonuclease 3">
    <location>
        <begin position="1"/>
        <end position="226"/>
    </location>
</feature>
<feature type="domain" description="RNase III" evidence="1">
    <location>
        <begin position="6"/>
        <end position="128"/>
    </location>
</feature>
<feature type="domain" description="DRBM" evidence="1">
    <location>
        <begin position="155"/>
        <end position="225"/>
    </location>
</feature>
<feature type="active site" evidence="1">
    <location>
        <position position="45"/>
    </location>
</feature>
<feature type="active site" evidence="1">
    <location>
        <position position="117"/>
    </location>
</feature>
<feature type="binding site" evidence="1">
    <location>
        <position position="41"/>
    </location>
    <ligand>
        <name>Mg(2+)</name>
        <dbReference type="ChEBI" id="CHEBI:18420"/>
    </ligand>
</feature>
<feature type="binding site" evidence="1">
    <location>
        <position position="114"/>
    </location>
    <ligand>
        <name>Mg(2+)</name>
        <dbReference type="ChEBI" id="CHEBI:18420"/>
    </ligand>
</feature>
<feature type="binding site" evidence="1">
    <location>
        <position position="117"/>
    </location>
    <ligand>
        <name>Mg(2+)</name>
        <dbReference type="ChEBI" id="CHEBI:18420"/>
    </ligand>
</feature>
<name>RNC_SALPK</name>
<gene>
    <name evidence="1" type="primary">rnc</name>
    <name type="ordered locus">SSPA0269</name>
</gene>
<dbReference type="EC" id="3.1.26.3" evidence="1"/>
<dbReference type="EMBL" id="FM200053">
    <property type="protein sequence ID" value="CAR58384.1"/>
    <property type="molecule type" value="Genomic_DNA"/>
</dbReference>
<dbReference type="RefSeq" id="WP_001068341.1">
    <property type="nucleotide sequence ID" value="NC_011147.1"/>
</dbReference>
<dbReference type="SMR" id="B5BAT0"/>
<dbReference type="GeneID" id="66757008"/>
<dbReference type="KEGG" id="sek:SSPA0269"/>
<dbReference type="HOGENOM" id="CLU_000907_1_1_6"/>
<dbReference type="Proteomes" id="UP000001869">
    <property type="component" value="Chromosome"/>
</dbReference>
<dbReference type="GO" id="GO:0005737">
    <property type="term" value="C:cytoplasm"/>
    <property type="evidence" value="ECO:0007669"/>
    <property type="project" value="UniProtKB-SubCell"/>
</dbReference>
<dbReference type="GO" id="GO:0003725">
    <property type="term" value="F:double-stranded RNA binding"/>
    <property type="evidence" value="ECO:0007669"/>
    <property type="project" value="TreeGrafter"/>
</dbReference>
<dbReference type="GO" id="GO:0046872">
    <property type="term" value="F:metal ion binding"/>
    <property type="evidence" value="ECO:0007669"/>
    <property type="project" value="UniProtKB-KW"/>
</dbReference>
<dbReference type="GO" id="GO:0004525">
    <property type="term" value="F:ribonuclease III activity"/>
    <property type="evidence" value="ECO:0007669"/>
    <property type="project" value="UniProtKB-UniRule"/>
</dbReference>
<dbReference type="GO" id="GO:0019843">
    <property type="term" value="F:rRNA binding"/>
    <property type="evidence" value="ECO:0007669"/>
    <property type="project" value="UniProtKB-KW"/>
</dbReference>
<dbReference type="GO" id="GO:0006397">
    <property type="term" value="P:mRNA processing"/>
    <property type="evidence" value="ECO:0007669"/>
    <property type="project" value="UniProtKB-UniRule"/>
</dbReference>
<dbReference type="GO" id="GO:0010468">
    <property type="term" value="P:regulation of gene expression"/>
    <property type="evidence" value="ECO:0007669"/>
    <property type="project" value="TreeGrafter"/>
</dbReference>
<dbReference type="GO" id="GO:0006364">
    <property type="term" value="P:rRNA processing"/>
    <property type="evidence" value="ECO:0007669"/>
    <property type="project" value="UniProtKB-UniRule"/>
</dbReference>
<dbReference type="GO" id="GO:0008033">
    <property type="term" value="P:tRNA processing"/>
    <property type="evidence" value="ECO:0007669"/>
    <property type="project" value="UniProtKB-KW"/>
</dbReference>
<dbReference type="CDD" id="cd10845">
    <property type="entry name" value="DSRM_RNAse_III_family"/>
    <property type="match status" value="1"/>
</dbReference>
<dbReference type="CDD" id="cd00593">
    <property type="entry name" value="RIBOc"/>
    <property type="match status" value="1"/>
</dbReference>
<dbReference type="FunFam" id="1.10.1520.10:FF:000001">
    <property type="entry name" value="Ribonuclease 3"/>
    <property type="match status" value="1"/>
</dbReference>
<dbReference type="FunFam" id="3.30.160.20:FF:000003">
    <property type="entry name" value="Ribonuclease 3"/>
    <property type="match status" value="1"/>
</dbReference>
<dbReference type="Gene3D" id="3.30.160.20">
    <property type="match status" value="1"/>
</dbReference>
<dbReference type="Gene3D" id="1.10.1520.10">
    <property type="entry name" value="Ribonuclease III domain"/>
    <property type="match status" value="1"/>
</dbReference>
<dbReference type="HAMAP" id="MF_00104">
    <property type="entry name" value="RNase_III"/>
    <property type="match status" value="1"/>
</dbReference>
<dbReference type="InterPro" id="IPR014720">
    <property type="entry name" value="dsRBD_dom"/>
</dbReference>
<dbReference type="InterPro" id="IPR011907">
    <property type="entry name" value="RNase_III"/>
</dbReference>
<dbReference type="InterPro" id="IPR000999">
    <property type="entry name" value="RNase_III_dom"/>
</dbReference>
<dbReference type="InterPro" id="IPR036389">
    <property type="entry name" value="RNase_III_sf"/>
</dbReference>
<dbReference type="NCBIfam" id="TIGR02191">
    <property type="entry name" value="RNaseIII"/>
    <property type="match status" value="1"/>
</dbReference>
<dbReference type="PANTHER" id="PTHR11207:SF0">
    <property type="entry name" value="RIBONUCLEASE 3"/>
    <property type="match status" value="1"/>
</dbReference>
<dbReference type="PANTHER" id="PTHR11207">
    <property type="entry name" value="RIBONUCLEASE III"/>
    <property type="match status" value="1"/>
</dbReference>
<dbReference type="Pfam" id="PF00035">
    <property type="entry name" value="dsrm"/>
    <property type="match status" value="1"/>
</dbReference>
<dbReference type="Pfam" id="PF14622">
    <property type="entry name" value="Ribonucleas_3_3"/>
    <property type="match status" value="1"/>
</dbReference>
<dbReference type="SMART" id="SM00358">
    <property type="entry name" value="DSRM"/>
    <property type="match status" value="1"/>
</dbReference>
<dbReference type="SMART" id="SM00535">
    <property type="entry name" value="RIBOc"/>
    <property type="match status" value="1"/>
</dbReference>
<dbReference type="SUPFAM" id="SSF54768">
    <property type="entry name" value="dsRNA-binding domain-like"/>
    <property type="match status" value="1"/>
</dbReference>
<dbReference type="SUPFAM" id="SSF69065">
    <property type="entry name" value="RNase III domain-like"/>
    <property type="match status" value="1"/>
</dbReference>
<dbReference type="PROSITE" id="PS50137">
    <property type="entry name" value="DS_RBD"/>
    <property type="match status" value="1"/>
</dbReference>
<dbReference type="PROSITE" id="PS00517">
    <property type="entry name" value="RNASE_3_1"/>
    <property type="match status" value="1"/>
</dbReference>
<dbReference type="PROSITE" id="PS50142">
    <property type="entry name" value="RNASE_3_2"/>
    <property type="match status" value="1"/>
</dbReference>
<comment type="function">
    <text evidence="1">Digests double-stranded RNA. Involved in the processing of primary rRNA transcript to yield the immediate precursors to the large and small rRNAs (23S and 16S). Processes some mRNAs, and tRNAs when they are encoded in the rRNA operon. Processes pre-crRNA and tracrRNA of type II CRISPR loci if present in the organism.</text>
</comment>
<comment type="catalytic activity">
    <reaction evidence="1">
        <text>Endonucleolytic cleavage to 5'-phosphomonoester.</text>
        <dbReference type="EC" id="3.1.26.3"/>
    </reaction>
</comment>
<comment type="cofactor">
    <cofactor evidence="1">
        <name>Mg(2+)</name>
        <dbReference type="ChEBI" id="CHEBI:18420"/>
    </cofactor>
</comment>
<comment type="subunit">
    <text evidence="1">Homodimer.</text>
</comment>
<comment type="subcellular location">
    <subcellularLocation>
        <location evidence="1">Cytoplasm</location>
    </subcellularLocation>
</comment>
<comment type="similarity">
    <text evidence="1">Belongs to the ribonuclease III family.</text>
</comment>
<protein>
    <recommendedName>
        <fullName evidence="1">Ribonuclease 3</fullName>
        <ecNumber evidence="1">3.1.26.3</ecNumber>
    </recommendedName>
    <alternativeName>
        <fullName evidence="1">Ribonuclease III</fullName>
        <shortName evidence="1">RNase III</shortName>
    </alternativeName>
</protein>
<sequence length="226" mass="25505">MNPIVINRLQRKLGYTFNHQELLQQALTHRSASSKHNERLEFLGDSILSFVIANALYHRFPRVDEGDMSRMRATLVRGNTLAELAREFDLGECLRLGPGELKSGGFRRESILADTVEALIGGVFLDSNIQTVEQLILNWYKTRLDEISPGDKQKDPKTRLQEYLQGRHLPLPSYLVVQVRGEAHDQEFTIHCQVSGLSEPVVGTGSSRRKAEQAAAEQALKKLELE</sequence>